<reference key="1">
    <citation type="journal article" date="2008" name="J. Cell Biol.">
        <title>The keratin-binding protein Albatross regulates polarization of epithelial cells.</title>
        <authorList>
            <person name="Sugimoto M."/>
            <person name="Inoko A."/>
            <person name="Shiromizu T."/>
            <person name="Nakayama M."/>
            <person name="Zou P."/>
            <person name="Yonemura S."/>
            <person name="Hayashi Y."/>
            <person name="Izawa I."/>
            <person name="Sasoh M."/>
            <person name="Uji Y."/>
            <person name="Kaibuchi K."/>
            <person name="Kiyono T."/>
            <person name="Inagaki M."/>
        </authorList>
    </citation>
    <scope>NUCLEOTIDE SEQUENCE [MRNA] (ISOFORM 6)</scope>
    <scope>FUNCTION</scope>
    <scope>SUBCELLULAR LOCATION</scope>
    <scope>INTERACTION WITH PARD3</scope>
    <scope>VARIANTS VAL-65 AND GLY-151</scope>
    <source>
        <tissue>Lung</tissue>
    </source>
</reference>
<reference key="2">
    <citation type="journal article" date="2004" name="Nat. Genet.">
        <title>Complete sequencing and characterization of 21,243 full-length human cDNAs.</title>
        <authorList>
            <person name="Ota T."/>
            <person name="Suzuki Y."/>
            <person name="Nishikawa T."/>
            <person name="Otsuki T."/>
            <person name="Sugiyama T."/>
            <person name="Irie R."/>
            <person name="Wakamatsu A."/>
            <person name="Hayashi K."/>
            <person name="Sato H."/>
            <person name="Nagai K."/>
            <person name="Kimura K."/>
            <person name="Makita H."/>
            <person name="Sekine M."/>
            <person name="Obayashi M."/>
            <person name="Nishi T."/>
            <person name="Shibahara T."/>
            <person name="Tanaka T."/>
            <person name="Ishii S."/>
            <person name="Yamamoto J."/>
            <person name="Saito K."/>
            <person name="Kawai Y."/>
            <person name="Isono Y."/>
            <person name="Nakamura Y."/>
            <person name="Nagahari K."/>
            <person name="Murakami K."/>
            <person name="Yasuda T."/>
            <person name="Iwayanagi T."/>
            <person name="Wagatsuma M."/>
            <person name="Shiratori A."/>
            <person name="Sudo H."/>
            <person name="Hosoiri T."/>
            <person name="Kaku Y."/>
            <person name="Kodaira H."/>
            <person name="Kondo H."/>
            <person name="Sugawara M."/>
            <person name="Takahashi M."/>
            <person name="Kanda K."/>
            <person name="Yokoi T."/>
            <person name="Furuya T."/>
            <person name="Kikkawa E."/>
            <person name="Omura Y."/>
            <person name="Abe K."/>
            <person name="Kamihara K."/>
            <person name="Katsuta N."/>
            <person name="Sato K."/>
            <person name="Tanikawa M."/>
            <person name="Yamazaki M."/>
            <person name="Ninomiya K."/>
            <person name="Ishibashi T."/>
            <person name="Yamashita H."/>
            <person name="Murakawa K."/>
            <person name="Fujimori K."/>
            <person name="Tanai H."/>
            <person name="Kimata M."/>
            <person name="Watanabe M."/>
            <person name="Hiraoka S."/>
            <person name="Chiba Y."/>
            <person name="Ishida S."/>
            <person name="Ono Y."/>
            <person name="Takiguchi S."/>
            <person name="Watanabe S."/>
            <person name="Yosida M."/>
            <person name="Hotuta T."/>
            <person name="Kusano J."/>
            <person name="Kanehori K."/>
            <person name="Takahashi-Fujii A."/>
            <person name="Hara H."/>
            <person name="Tanase T.-O."/>
            <person name="Nomura Y."/>
            <person name="Togiya S."/>
            <person name="Komai F."/>
            <person name="Hara R."/>
            <person name="Takeuchi K."/>
            <person name="Arita M."/>
            <person name="Imose N."/>
            <person name="Musashino K."/>
            <person name="Yuuki H."/>
            <person name="Oshima A."/>
            <person name="Sasaki N."/>
            <person name="Aotsuka S."/>
            <person name="Yoshikawa Y."/>
            <person name="Matsunawa H."/>
            <person name="Ichihara T."/>
            <person name="Shiohata N."/>
            <person name="Sano S."/>
            <person name="Moriya S."/>
            <person name="Momiyama H."/>
            <person name="Satoh N."/>
            <person name="Takami S."/>
            <person name="Terashima Y."/>
            <person name="Suzuki O."/>
            <person name="Nakagawa S."/>
            <person name="Senoh A."/>
            <person name="Mizoguchi H."/>
            <person name="Goto Y."/>
            <person name="Shimizu F."/>
            <person name="Wakebe H."/>
            <person name="Hishigaki H."/>
            <person name="Watanabe T."/>
            <person name="Sugiyama A."/>
            <person name="Takemoto M."/>
            <person name="Kawakami B."/>
            <person name="Yamazaki M."/>
            <person name="Watanabe K."/>
            <person name="Kumagai A."/>
            <person name="Itakura S."/>
            <person name="Fukuzumi Y."/>
            <person name="Fujimori Y."/>
            <person name="Komiyama M."/>
            <person name="Tashiro H."/>
            <person name="Tanigami A."/>
            <person name="Fujiwara T."/>
            <person name="Ono T."/>
            <person name="Yamada K."/>
            <person name="Fujii Y."/>
            <person name="Ozaki K."/>
            <person name="Hirao M."/>
            <person name="Ohmori Y."/>
            <person name="Kawabata A."/>
            <person name="Hikiji T."/>
            <person name="Kobatake N."/>
            <person name="Inagaki H."/>
            <person name="Ikema Y."/>
            <person name="Okamoto S."/>
            <person name="Okitani R."/>
            <person name="Kawakami T."/>
            <person name="Noguchi S."/>
            <person name="Itoh T."/>
            <person name="Shigeta K."/>
            <person name="Senba T."/>
            <person name="Matsumura K."/>
            <person name="Nakajima Y."/>
            <person name="Mizuno T."/>
            <person name="Morinaga M."/>
            <person name="Sasaki M."/>
            <person name="Togashi T."/>
            <person name="Oyama M."/>
            <person name="Hata H."/>
            <person name="Watanabe M."/>
            <person name="Komatsu T."/>
            <person name="Mizushima-Sugano J."/>
            <person name="Satoh T."/>
            <person name="Shirai Y."/>
            <person name="Takahashi Y."/>
            <person name="Nakagawa K."/>
            <person name="Okumura K."/>
            <person name="Nagase T."/>
            <person name="Nomura N."/>
            <person name="Kikuchi H."/>
            <person name="Masuho Y."/>
            <person name="Yamashita R."/>
            <person name="Nakai K."/>
            <person name="Yada T."/>
            <person name="Nakamura Y."/>
            <person name="Ohara O."/>
            <person name="Isogai T."/>
            <person name="Sugano S."/>
        </authorList>
    </citation>
    <scope>NUCLEOTIDE SEQUENCE [LARGE SCALE MRNA] (ISOFORM 3)</scope>
    <scope>NUCLEOTIDE SEQUENCE [LARGE SCALE MRNA] OF 659-1133 (ISOFORM 2)</scope>
    <source>
        <tissue>Spleen</tissue>
        <tissue>Testis</tissue>
    </source>
</reference>
<reference key="3">
    <citation type="journal article" date="2006" name="Nature">
        <title>DNA sequence of human chromosome 17 and analysis of rearrangement in the human lineage.</title>
        <authorList>
            <person name="Zody M.C."/>
            <person name="Garber M."/>
            <person name="Adams D.J."/>
            <person name="Sharpe T."/>
            <person name="Harrow J."/>
            <person name="Lupski J.R."/>
            <person name="Nicholson C."/>
            <person name="Searle S.M."/>
            <person name="Wilming L."/>
            <person name="Young S.K."/>
            <person name="Abouelleil A."/>
            <person name="Allen N.R."/>
            <person name="Bi W."/>
            <person name="Bloom T."/>
            <person name="Borowsky M.L."/>
            <person name="Bugalter B.E."/>
            <person name="Butler J."/>
            <person name="Chang J.L."/>
            <person name="Chen C.-K."/>
            <person name="Cook A."/>
            <person name="Corum B."/>
            <person name="Cuomo C.A."/>
            <person name="de Jong P.J."/>
            <person name="DeCaprio D."/>
            <person name="Dewar K."/>
            <person name="FitzGerald M."/>
            <person name="Gilbert J."/>
            <person name="Gibson R."/>
            <person name="Gnerre S."/>
            <person name="Goldstein S."/>
            <person name="Grafham D.V."/>
            <person name="Grocock R."/>
            <person name="Hafez N."/>
            <person name="Hagopian D.S."/>
            <person name="Hart E."/>
            <person name="Norman C.H."/>
            <person name="Humphray S."/>
            <person name="Jaffe D.B."/>
            <person name="Jones M."/>
            <person name="Kamal M."/>
            <person name="Khodiyar V.K."/>
            <person name="LaButti K."/>
            <person name="Laird G."/>
            <person name="Lehoczky J."/>
            <person name="Liu X."/>
            <person name="Lokyitsang T."/>
            <person name="Loveland J."/>
            <person name="Lui A."/>
            <person name="Macdonald P."/>
            <person name="Major J.E."/>
            <person name="Matthews L."/>
            <person name="Mauceli E."/>
            <person name="McCarroll S.A."/>
            <person name="Mihalev A.H."/>
            <person name="Mudge J."/>
            <person name="Nguyen C."/>
            <person name="Nicol R."/>
            <person name="O'Leary S.B."/>
            <person name="Osoegawa K."/>
            <person name="Schwartz D.C."/>
            <person name="Shaw-Smith C."/>
            <person name="Stankiewicz P."/>
            <person name="Steward C."/>
            <person name="Swarbreck D."/>
            <person name="Venkataraman V."/>
            <person name="Whittaker C.A."/>
            <person name="Yang X."/>
            <person name="Zimmer A.R."/>
            <person name="Bradley A."/>
            <person name="Hubbard T."/>
            <person name="Birren B.W."/>
            <person name="Rogers J."/>
            <person name="Lander E.S."/>
            <person name="Nusbaum C."/>
        </authorList>
    </citation>
    <scope>NUCLEOTIDE SEQUENCE [LARGE SCALE GENOMIC DNA]</scope>
</reference>
<reference key="4">
    <citation type="journal article" date="2001" name="DNA Res.">
        <title>Prediction of the coding sequences of unidentified human genes. XX. The complete sequences of 100 new cDNA clones from brain which code for large proteins in vitro.</title>
        <authorList>
            <person name="Nagase T."/>
            <person name="Nakayama M."/>
            <person name="Nakajima D."/>
            <person name="Kikuno R."/>
            <person name="Ohara O."/>
        </authorList>
    </citation>
    <scope>NUCLEOTIDE SEQUENCE [LARGE SCALE MRNA] OF 63-1133 (ISOFORM 4)</scope>
    <scope>VARIANT GLY-151</scope>
    <source>
        <tissue>Brain</tissue>
    </source>
</reference>
<reference key="5">
    <citation type="journal article" date="2004" name="Genome Res.">
        <title>The status, quality, and expansion of the NIH full-length cDNA project: the Mammalian Gene Collection (MGC).</title>
        <authorList>
            <consortium name="The MGC Project Team"/>
        </authorList>
    </citation>
    <scope>NUCLEOTIDE SEQUENCE [LARGE SCALE MRNA] OF 445-1133 (ISOFORM 1)</scope>
    <source>
        <tissue>Muscle</tissue>
    </source>
</reference>
<reference key="6">
    <citation type="journal article" date="2000" name="Biochim. Biophys. Acta">
        <title>A novel protein (Fbf-1) that binds to CD95/APO-1/FAS and shows sequence similarity to trichohyalin and plectin.</title>
        <authorList>
            <person name="Schmidt T."/>
            <person name="Karsunky H."/>
            <person name="Frass B."/>
            <person name="Baum W."/>
            <person name="Denzel A."/>
            <person name="Moeroey T."/>
        </authorList>
    </citation>
    <scope>IDENTIFICATION</scope>
</reference>
<reference key="7">
    <citation type="journal article" date="2009" name="Anal. Chem.">
        <title>Lys-N and trypsin cover complementary parts of the phosphoproteome in a refined SCX-based approach.</title>
        <authorList>
            <person name="Gauci S."/>
            <person name="Helbig A.O."/>
            <person name="Slijper M."/>
            <person name="Krijgsveld J."/>
            <person name="Heck A.J."/>
            <person name="Mohammed S."/>
        </authorList>
    </citation>
    <scope>IDENTIFICATION BY MASS SPECTROMETRY [LARGE SCALE ANALYSIS]</scope>
</reference>
<reference key="8">
    <citation type="journal article" date="2011" name="EMBO J.">
        <title>Novel asymmetrically localizing components of human centrosomes identified by complementary proteomics methods.</title>
        <authorList>
            <person name="Jakobsen L."/>
            <person name="Vanselow K."/>
            <person name="Skogs M."/>
            <person name="Toyoda Y."/>
            <person name="Lundberg E."/>
            <person name="Poser I."/>
            <person name="Falkenby L.G."/>
            <person name="Bennetzen M."/>
            <person name="Westendorf J."/>
            <person name="Nigg E.A."/>
            <person name="Uhlen M."/>
            <person name="Hyman A.A."/>
            <person name="Andersen J.S."/>
        </authorList>
    </citation>
    <scope>IDENTIFICATION BY MASS SPECTROMETRY</scope>
    <scope>SUBCELLULAR LOCATION</scope>
</reference>
<reference key="9">
    <citation type="journal article" date="2013" name="Genes Dev.">
        <title>Centriole distal appendages promote membrane docking, leading to cilia initiation.</title>
        <authorList>
            <person name="Tanos B.E."/>
            <person name="Yang H.J."/>
            <person name="Soni R."/>
            <person name="Wang W.J."/>
            <person name="Macaluso F.P."/>
            <person name="Asara J.M."/>
            <person name="Tsou M.F."/>
        </authorList>
    </citation>
    <scope>FUNCTION</scope>
    <scope>SUBCELLULAR LOCATION</scope>
</reference>
<reference key="10">
    <citation type="journal article" date="2013" name="J. Proteome Res.">
        <title>Toward a comprehensive characterization of a human cancer cell phosphoproteome.</title>
        <authorList>
            <person name="Zhou H."/>
            <person name="Di Palma S."/>
            <person name="Preisinger C."/>
            <person name="Peng M."/>
            <person name="Polat A.N."/>
            <person name="Heck A.J."/>
            <person name="Mohammed S."/>
        </authorList>
    </citation>
    <scope>PHOSPHORYLATION [LARGE SCALE ANALYSIS] AT SER-142</scope>
    <scope>IDENTIFICATION BY MASS SPECTROMETRY [LARGE SCALE ANALYSIS]</scope>
    <source>
        <tissue>Erythroleukemia</tissue>
    </source>
</reference>
<reference key="11">
    <citation type="journal article" date="2017" name="Nat. Struct. Mol. Biol.">
        <title>Site-specific mapping of the human SUMO proteome reveals co-modification with phosphorylation.</title>
        <authorList>
            <person name="Hendriks I.A."/>
            <person name="Lyon D."/>
            <person name="Young C."/>
            <person name="Jensen L.J."/>
            <person name="Vertegaal A.C."/>
            <person name="Nielsen M.L."/>
        </authorList>
    </citation>
    <scope>SUMOYLATION [LARGE SCALE ANALYSIS] AT LYS-960</scope>
    <scope>IDENTIFICATION BY MASS SPECTROMETRY [LARGE SCALE ANALYSIS]</scope>
</reference>
<reference key="12">
    <citation type="journal article" date="2019" name="J. Biol. Chem.">
        <title>The C7orf43/TRAPPC14 component links the TRAPPII complex to Rabin8 for preciliary vesicle tethering at the mother centriole during ciliogenesis.</title>
        <authorList>
            <person name="Cuenca A."/>
            <person name="Insinna C."/>
            <person name="Zhao H."/>
            <person name="John P."/>
            <person name="Weiss M.A."/>
            <person name="Lu Q."/>
            <person name="Walia V."/>
            <person name="Specht S."/>
            <person name="Manivannan S."/>
            <person name="Stauffer J."/>
            <person name="Peden A.A."/>
            <person name="Westlake C.J."/>
        </authorList>
    </citation>
    <scope>INTERACTION WITH TRAPPC14</scope>
</reference>
<gene>
    <name type="primary">FBF1</name>
    <name type="synonym">ALB</name>
    <name type="synonym">KIAA1863</name>
</gene>
<keyword id="KW-0025">Alternative splicing</keyword>
<keyword id="KW-0965">Cell junction</keyword>
<keyword id="KW-0970">Cilium biogenesis/degradation</keyword>
<keyword id="KW-0175">Coiled coil</keyword>
<keyword id="KW-0963">Cytoplasm</keyword>
<keyword id="KW-0206">Cytoskeleton</keyword>
<keyword id="KW-1017">Isopeptide bond</keyword>
<keyword id="KW-0597">Phosphoprotein</keyword>
<keyword id="KW-1267">Proteomics identification</keyword>
<keyword id="KW-1185">Reference proteome</keyword>
<keyword id="KW-0832">Ubl conjugation</keyword>
<organism>
    <name type="scientific">Homo sapiens</name>
    <name type="common">Human</name>
    <dbReference type="NCBI Taxonomy" id="9606"/>
    <lineage>
        <taxon>Eukaryota</taxon>
        <taxon>Metazoa</taxon>
        <taxon>Chordata</taxon>
        <taxon>Craniata</taxon>
        <taxon>Vertebrata</taxon>
        <taxon>Euteleostomi</taxon>
        <taxon>Mammalia</taxon>
        <taxon>Eutheria</taxon>
        <taxon>Euarchontoglires</taxon>
        <taxon>Primates</taxon>
        <taxon>Haplorrhini</taxon>
        <taxon>Catarrhini</taxon>
        <taxon>Hominidae</taxon>
        <taxon>Homo</taxon>
    </lineage>
</organism>
<name>FBF1_HUMAN</name>
<sequence length="1133" mass="125446">MAPKTKKGCKVTLPEKPVKLASHTRDTTGVSQMFPSSKARTKSLLGDDVFSTMAGLEEADAEVSGISEADPQALLQAMKDLDGMDADILGLKKSNSAPSKKAAKDPGKGELPNHPKPAGGAIPTKKSLPSPSSSGHQNRRFSSEDLEDPLRGLLSYDEGGITKQPPVTQSKTASDKSPSTVRDQGPSIPLTPGDTPIRKKEELLFDDGDDIMATLGFGDSPKAEKRQIGDQEGPRPARSTLDELLGRGMATKLLARPGTGEHREFKLDKKYQRPQDSEDMWGDEDFTFGAYQPTVVSSEGRQSRRQSVSRFFADSGADPKGEPGSKQSPPMASSPIQPRKGGADWLGLKDEDLDLFPASPTREAHRESSVPVTPSVPPPASQHSTPAGLPPSRAKPPTEGAGSPAKASQASKLRASKEEKEDWLSHALSRKKSQGLAREQHAGTSEGLHLAGTAGHPPSGSQPLTSTQGLEHAAAGGSSGTTARERPCVRPGVSGSPVTQNHAASALPTGSPKRGTAPGDLSATEPATCFPSTQKPTEPSVPVQPLLPESLARSLLPSTEYQKQLLAAQVQLQCSPAELQAELLHSQARLAELEAQVRKLELERAQHELLLGSLQQQHQADLELIESAHRSRIKVLETSYQQREERLRRENEELSARYLSQCQEAEQARAELTAQHQRRLAAIAQEKDQEMERLRELQRASILDMRRDHEEQLQRLKLLKDREVDAATSATSHTRSLNSIIHQMEKFSSSLHELSSRVEASHLTTSQERELGIRQRDEQLRALQERLGQQQRDMEEERSRQQEVIGKMEARLNEQSRLLEQERWRVTAEQSKAESMQRALEEQRKVTAQQMAMERAELERAKSALLEEQKSVMLKCGEERRRLAAEWAEFSAQQKLSKERAEREAERALQVDTQREGTLISLAKQAELKIRASELRAEEKQLAAERAALEQERQELRLEKERINATALRVKLRAEEVESMSKVASEKYEEGERALREAQQVQAEQQARLQAVQQQQERLRKQEQHMHQEHLSLAQQRLQLDRARQDLPSSLVGLFPRAQGPAASSQSALMPPAPTTRWCSQPPTGLDPSPLHLHARLALLRHMAEQDRDFLENEQFFLETLKKGSYNLTSHSA</sequence>
<feature type="chain" id="PRO_0000297646" description="Fas-binding factor 1">
    <location>
        <begin position="1"/>
        <end position="1133"/>
    </location>
</feature>
<feature type="region of interest" description="Disordered" evidence="3">
    <location>
        <begin position="89"/>
        <end position="198"/>
    </location>
</feature>
<feature type="region of interest" description="Disordered" evidence="3">
    <location>
        <begin position="211"/>
        <end position="544"/>
    </location>
</feature>
<feature type="region of interest" description="Disordered" evidence="3">
    <location>
        <begin position="1062"/>
        <end position="1085"/>
    </location>
</feature>
<feature type="coiled-coil region" evidence="2">
    <location>
        <begin position="577"/>
        <end position="727"/>
    </location>
</feature>
<feature type="coiled-coil region" evidence="2">
    <location>
        <begin position="773"/>
        <end position="870"/>
    </location>
</feature>
<feature type="compositionally biased region" description="Basic and acidic residues" evidence="3">
    <location>
        <begin position="102"/>
        <end position="113"/>
    </location>
</feature>
<feature type="compositionally biased region" description="Low complexity" evidence="3">
    <location>
        <begin position="125"/>
        <end position="134"/>
    </location>
</feature>
<feature type="compositionally biased region" description="Polar residues" evidence="3">
    <location>
        <begin position="165"/>
        <end position="182"/>
    </location>
</feature>
<feature type="compositionally biased region" description="Basic and acidic residues" evidence="3">
    <location>
        <begin position="221"/>
        <end position="245"/>
    </location>
</feature>
<feature type="compositionally biased region" description="Basic and acidic residues" evidence="3">
    <location>
        <begin position="259"/>
        <end position="276"/>
    </location>
</feature>
<feature type="compositionally biased region" description="Acidic residues" evidence="3">
    <location>
        <begin position="277"/>
        <end position="286"/>
    </location>
</feature>
<feature type="compositionally biased region" description="Low complexity" evidence="3">
    <location>
        <begin position="295"/>
        <end position="310"/>
    </location>
</feature>
<feature type="compositionally biased region" description="Polar residues" evidence="3">
    <location>
        <begin position="325"/>
        <end position="336"/>
    </location>
</feature>
<feature type="compositionally biased region" description="Basic and acidic residues" evidence="3">
    <location>
        <begin position="415"/>
        <end position="424"/>
    </location>
</feature>
<feature type="compositionally biased region" description="Polar residues" evidence="3">
    <location>
        <begin position="459"/>
        <end position="469"/>
    </location>
</feature>
<feature type="compositionally biased region" description="Low complexity" evidence="3">
    <location>
        <begin position="473"/>
        <end position="482"/>
    </location>
</feature>
<feature type="modified residue" description="Phosphoserine" evidence="12">
    <location>
        <position position="142"/>
    </location>
</feature>
<feature type="cross-link" description="Glycyl lysine isopeptide (Lys-Gly) (interchain with G-Cter in SUMO2)" evidence="13">
    <location>
        <position position="960"/>
    </location>
</feature>
<feature type="splice variant" id="VSP_041555" description="In isoform 6." evidence="10">
    <original>V</original>
    <variation>GSIDDFLGDLLGDDM</variation>
    <location>
        <position position="11"/>
    </location>
</feature>
<feature type="splice variant" id="VSP_040769" description="In isoform 5." evidence="11">
    <location>
        <position position="309"/>
    </location>
</feature>
<feature type="splice variant" id="VSP_027318" description="In isoform 4." evidence="8">
    <original>QPLTSTQGLEHAAAGGSSGTTARERPCVRPGVSGSPVTQNHAASALPTGSPKRGTA</original>
    <variation>LTWAFCHLHLERCLSSANLSPAHKGLSTQLLEGVLEQLHEKDRVSGLVSRGPL</variation>
    <location>
        <begin position="462"/>
        <end position="517"/>
    </location>
</feature>
<feature type="splice variant" id="VSP_027319" description="In isoform 4." evidence="8">
    <location>
        <begin position="518"/>
        <end position="1133"/>
    </location>
</feature>
<feature type="splice variant" id="VSP_027320" description="In isoform 3." evidence="9">
    <original>KLELERAQHELLLGSLQQQHQADLELIESAHRSRIKVLETSYQQREERLRRENEELSARYLSQC</original>
    <variation>GSGAVGAGGRVATGGDTESGWKLPQEGGRAVGTGQRGVQPPPLPGCWPSCCLPGAEAGARTGPA</variation>
    <location>
        <begin position="599"/>
        <end position="662"/>
    </location>
</feature>
<feature type="splice variant" id="VSP_027321" description="In isoform 3." evidence="9">
    <location>
        <begin position="663"/>
        <end position="1133"/>
    </location>
</feature>
<feature type="splice variant" id="VSP_027322" description="In isoform 2." evidence="9">
    <original>SKE</original>
    <variation>RAG</variation>
    <location>
        <begin position="897"/>
        <end position="899"/>
    </location>
</feature>
<feature type="splice variant" id="VSP_027323" description="In isoform 2." evidence="9">
    <location>
        <begin position="900"/>
        <end position="1133"/>
    </location>
</feature>
<feature type="splice variant" id="VSP_040770" description="In isoform 5 and isoform 6." evidence="10">
    <original>K</original>
    <variation>KE</variation>
    <location>
        <position position="924"/>
    </location>
</feature>
<feature type="sequence variant" id="VAR_034659" description="In dbSNP:rs1135889." evidence="5">
    <original>G</original>
    <variation>V</variation>
    <location>
        <position position="65"/>
    </location>
</feature>
<feature type="sequence variant" id="VAR_034660" description="In dbSNP:rs2305913." evidence="4 5">
    <original>R</original>
    <variation>G</variation>
    <location>
        <position position="151"/>
    </location>
</feature>
<feature type="sequence variant" id="VAR_034661" description="In dbSNP:rs7218738.">
    <original>P</original>
    <variation>S</variation>
    <location>
        <position position="371"/>
    </location>
</feature>
<feature type="sequence variant" id="VAR_034662" description="In dbSNP:rs7213548.">
    <original>C</original>
    <variation>S</variation>
    <location>
        <position position="574"/>
    </location>
</feature>
<feature type="sequence conflict" description="In Ref. 2; BAB71400." evidence="11" ref="2">
    <original>Q</original>
    <variation>R</variation>
    <location>
        <position position="801"/>
    </location>
</feature>
<dbReference type="EMBL" id="AB354594">
    <property type="protein sequence ID" value="BAG71501.1"/>
    <property type="molecule type" value="mRNA"/>
</dbReference>
<dbReference type="EMBL" id="AK057261">
    <property type="protein sequence ID" value="BAB71400.1"/>
    <property type="status" value="ALT_INIT"/>
    <property type="molecule type" value="mRNA"/>
</dbReference>
<dbReference type="EMBL" id="AK074045">
    <property type="protein sequence ID" value="BAB84871.1"/>
    <property type="status" value="ALT_INIT"/>
    <property type="molecule type" value="mRNA"/>
</dbReference>
<dbReference type="EMBL" id="AC087289">
    <property type="status" value="NOT_ANNOTATED_CDS"/>
    <property type="molecule type" value="Genomic_DNA"/>
</dbReference>
<dbReference type="EMBL" id="AB058766">
    <property type="protein sequence ID" value="BAB47492.1"/>
    <property type="molecule type" value="mRNA"/>
</dbReference>
<dbReference type="EMBL" id="BC007570">
    <property type="protein sequence ID" value="AAH07570.1"/>
    <property type="molecule type" value="mRNA"/>
</dbReference>
<dbReference type="CCDS" id="CCDS45779.2">
    <molecule id="Q8TES7-6"/>
</dbReference>
<dbReference type="RefSeq" id="NP_001306122.1">
    <molecule id="Q8TES7-6"/>
    <property type="nucleotide sequence ID" value="NM_001319193.2"/>
</dbReference>
<dbReference type="SMR" id="Q8TES7"/>
<dbReference type="BioGRID" id="124465">
    <property type="interactions" value="168"/>
</dbReference>
<dbReference type="CORUM" id="Q8TES7"/>
<dbReference type="FunCoup" id="Q8TES7">
    <property type="interactions" value="788"/>
</dbReference>
<dbReference type="IntAct" id="Q8TES7">
    <property type="interactions" value="141"/>
</dbReference>
<dbReference type="MINT" id="Q8TES7"/>
<dbReference type="STRING" id="9606.ENSP00000490726"/>
<dbReference type="GlyGen" id="Q8TES7">
    <property type="glycosylation" value="1 site"/>
</dbReference>
<dbReference type="iPTMnet" id="Q8TES7"/>
<dbReference type="PhosphoSitePlus" id="Q8TES7"/>
<dbReference type="BioMuta" id="FBF1"/>
<dbReference type="DMDM" id="156630449"/>
<dbReference type="jPOST" id="Q8TES7"/>
<dbReference type="MassIVE" id="Q8TES7"/>
<dbReference type="PaxDb" id="9606-ENSP00000324292"/>
<dbReference type="PeptideAtlas" id="Q8TES7"/>
<dbReference type="ProteomicsDB" id="74489">
    <molecule id="Q8TES7-1"/>
</dbReference>
<dbReference type="ProteomicsDB" id="74490">
    <molecule id="Q8TES7-2"/>
</dbReference>
<dbReference type="ProteomicsDB" id="74491">
    <molecule id="Q8TES7-3"/>
</dbReference>
<dbReference type="ProteomicsDB" id="74492">
    <molecule id="Q8TES7-4"/>
</dbReference>
<dbReference type="ProteomicsDB" id="74493">
    <molecule id="Q8TES7-5"/>
</dbReference>
<dbReference type="ProteomicsDB" id="74494">
    <molecule id="Q8TES7-6"/>
</dbReference>
<dbReference type="Antibodypedia" id="80115">
    <property type="antibodies" value="91 antibodies from 20 providers"/>
</dbReference>
<dbReference type="DNASU" id="85302"/>
<dbReference type="Ensembl" id="ENST00000586717.5">
    <molecule id="Q8TES7-1"/>
    <property type="protein sequence ID" value="ENSP00000465132.1"/>
    <property type="gene ID" value="ENSG00000188878.20"/>
</dbReference>
<dbReference type="Ensembl" id="ENST00000636174.2">
    <molecule id="Q8TES7-6"/>
    <property type="protein sequence ID" value="ENSP00000490726.1"/>
    <property type="gene ID" value="ENSG00000188878.20"/>
</dbReference>
<dbReference type="GeneID" id="85302"/>
<dbReference type="KEGG" id="hsa:85302"/>
<dbReference type="MANE-Select" id="ENST00000636174.2">
    <molecule id="Q8TES7-6"/>
    <property type="protein sequence ID" value="ENSP00000490726.1"/>
    <property type="RefSeq nucleotide sequence ID" value="NM_001319193.2"/>
    <property type="RefSeq protein sequence ID" value="NP_001306122.1"/>
</dbReference>
<dbReference type="UCSC" id="uc002jqd.2">
    <molecule id="Q8TES7-1"/>
    <property type="organism name" value="human"/>
</dbReference>
<dbReference type="AGR" id="HGNC:24674"/>
<dbReference type="CTD" id="85302"/>
<dbReference type="DisGeNET" id="85302"/>
<dbReference type="GeneCards" id="FBF1"/>
<dbReference type="HGNC" id="HGNC:24674">
    <property type="gene designation" value="FBF1"/>
</dbReference>
<dbReference type="HPA" id="ENSG00000188878">
    <property type="expression patterns" value="Tissue enhanced (testis)"/>
</dbReference>
<dbReference type="neXtProt" id="NX_Q8TES7"/>
<dbReference type="OpenTargets" id="ENSG00000188878"/>
<dbReference type="VEuPathDB" id="HostDB:ENSG00000188878"/>
<dbReference type="eggNOG" id="ENOG502QQFR">
    <property type="taxonomic scope" value="Eukaryota"/>
</dbReference>
<dbReference type="GeneTree" id="ENSGT00720000108861"/>
<dbReference type="InParanoid" id="Q8TES7"/>
<dbReference type="OMA" id="SFGHQYR"/>
<dbReference type="OrthoDB" id="8195456at2759"/>
<dbReference type="PAN-GO" id="Q8TES7">
    <property type="GO annotations" value="3 GO annotations based on evolutionary models"/>
</dbReference>
<dbReference type="PhylomeDB" id="Q8TES7"/>
<dbReference type="TreeFam" id="TF328742"/>
<dbReference type="PathwayCommons" id="Q8TES7"/>
<dbReference type="Reactome" id="R-HSA-5620912">
    <property type="pathway name" value="Anchoring of the basal body to the plasma membrane"/>
</dbReference>
<dbReference type="SignaLink" id="Q8TES7"/>
<dbReference type="BioGRID-ORCS" id="85302">
    <property type="hits" value="10 hits in 1151 CRISPR screens"/>
</dbReference>
<dbReference type="GenomeRNAi" id="85302"/>
<dbReference type="Pharos" id="Q8TES7">
    <property type="development level" value="Tbio"/>
</dbReference>
<dbReference type="PRO" id="PR:Q8TES7"/>
<dbReference type="Proteomes" id="UP000005640">
    <property type="component" value="Chromosome 17"/>
</dbReference>
<dbReference type="RNAct" id="Q8TES7">
    <property type="molecule type" value="protein"/>
</dbReference>
<dbReference type="Bgee" id="ENSG00000188878">
    <property type="expression patterns" value="Expressed in right testis and 95 other cell types or tissues"/>
</dbReference>
<dbReference type="ExpressionAtlas" id="Q8TES7">
    <property type="expression patterns" value="baseline and differential"/>
</dbReference>
<dbReference type="GO" id="GO:0070161">
    <property type="term" value="C:anchoring junction"/>
    <property type="evidence" value="ECO:0007669"/>
    <property type="project" value="UniProtKB-SubCell"/>
</dbReference>
<dbReference type="GO" id="GO:0005814">
    <property type="term" value="C:centriole"/>
    <property type="evidence" value="ECO:0000314"/>
    <property type="project" value="UniProtKB"/>
</dbReference>
<dbReference type="GO" id="GO:0005813">
    <property type="term" value="C:centrosome"/>
    <property type="evidence" value="ECO:0000314"/>
    <property type="project" value="HPA"/>
</dbReference>
<dbReference type="GO" id="GO:0036064">
    <property type="term" value="C:ciliary basal body"/>
    <property type="evidence" value="ECO:0000314"/>
    <property type="project" value="HPA"/>
</dbReference>
<dbReference type="GO" id="GO:0097539">
    <property type="term" value="C:ciliary transition fiber"/>
    <property type="evidence" value="ECO:0000314"/>
    <property type="project" value="MGI"/>
</dbReference>
<dbReference type="GO" id="GO:0005929">
    <property type="term" value="C:cilium"/>
    <property type="evidence" value="ECO:0000314"/>
    <property type="project" value="HPA"/>
</dbReference>
<dbReference type="GO" id="GO:0005829">
    <property type="term" value="C:cytosol"/>
    <property type="evidence" value="ECO:0000304"/>
    <property type="project" value="Reactome"/>
</dbReference>
<dbReference type="GO" id="GO:0000922">
    <property type="term" value="C:spindle pole"/>
    <property type="evidence" value="ECO:0000314"/>
    <property type="project" value="UniProtKB"/>
</dbReference>
<dbReference type="GO" id="GO:0043297">
    <property type="term" value="P:apical junction assembly"/>
    <property type="evidence" value="ECO:0000315"/>
    <property type="project" value="UniProtKB"/>
</dbReference>
<dbReference type="GO" id="GO:0060271">
    <property type="term" value="P:cilium assembly"/>
    <property type="evidence" value="ECO:0000315"/>
    <property type="project" value="UniProtKB"/>
</dbReference>
<dbReference type="GO" id="GO:0090162">
    <property type="term" value="P:establishment of epithelial cell polarity"/>
    <property type="evidence" value="ECO:0000315"/>
    <property type="project" value="UniProtKB"/>
</dbReference>
<dbReference type="InterPro" id="IPR033561">
    <property type="entry name" value="FBF1"/>
</dbReference>
<dbReference type="InterPro" id="IPR049390">
    <property type="entry name" value="FBF1_C"/>
</dbReference>
<dbReference type="PANTHER" id="PTHR33689">
    <property type="entry name" value="FAS-BINDING FACTOR 1"/>
    <property type="match status" value="1"/>
</dbReference>
<dbReference type="PANTHER" id="PTHR33689:SF1">
    <property type="entry name" value="FAS-BINDING FACTOR 1"/>
    <property type="match status" value="1"/>
</dbReference>
<dbReference type="Pfam" id="PF21007">
    <property type="entry name" value="FBF1"/>
    <property type="match status" value="1"/>
</dbReference>
<evidence type="ECO:0000250" key="1"/>
<evidence type="ECO:0000255" key="2"/>
<evidence type="ECO:0000256" key="3">
    <source>
        <dbReference type="SAM" id="MobiDB-lite"/>
    </source>
</evidence>
<evidence type="ECO:0000269" key="4">
    <source>
    </source>
</evidence>
<evidence type="ECO:0000269" key="5">
    <source>
    </source>
</evidence>
<evidence type="ECO:0000269" key="6">
    <source>
    </source>
</evidence>
<evidence type="ECO:0000269" key="7">
    <source>
    </source>
</evidence>
<evidence type="ECO:0000303" key="8">
    <source>
    </source>
</evidence>
<evidence type="ECO:0000303" key="9">
    <source>
    </source>
</evidence>
<evidence type="ECO:0000303" key="10">
    <source>
    </source>
</evidence>
<evidence type="ECO:0000305" key="11"/>
<evidence type="ECO:0007744" key="12">
    <source>
    </source>
</evidence>
<evidence type="ECO:0007744" key="13">
    <source>
    </source>
</evidence>
<protein>
    <recommendedName>
        <fullName>Fas-binding factor 1</fullName>
        <shortName>FBF-1</shortName>
    </recommendedName>
    <alternativeName>
        <fullName>Protein albatross</fullName>
    </alternativeName>
</protein>
<accession>Q8TES7</accession>
<accession>B5MEM5</accession>
<accession>Q96IF6</accession>
<accession>Q96JG4</accession>
<accession>Q96MA8</accession>
<comment type="function">
    <text evidence="5 6">Keratin-binding protein required for epithelial cell polarization. Involved in apical junction complex (AJC) assembly via its interaction with PARD3. Required for ciliogenesis.</text>
</comment>
<comment type="subunit">
    <text evidence="1 5 7">May interact with FAS cytoplasmic domain (By similarity). Interacts with PARD3 (By similarity) (PubMed:18838552). Interacts with TRAPPC14 (PubMed:31467083).</text>
</comment>
<comment type="interaction">
    <interactant intactId="EBI-10244131">
        <id>Q8TES7-6</id>
    </interactant>
    <interactant intactId="EBI-742038">
        <id>Q9P2A4</id>
        <label>ABI3</label>
    </interactant>
    <organismsDiffer>false</organismsDiffer>
    <experiments>3</experiments>
</comment>
<comment type="interaction">
    <interactant intactId="EBI-10244131">
        <id>Q8TES7-6</id>
    </interactant>
    <interactant intactId="EBI-2548012">
        <id>Q9H2G9</id>
        <label>BLZF1</label>
    </interactant>
    <organismsDiffer>false</organismsDiffer>
    <experiments>3</experiments>
</comment>
<comment type="interaction">
    <interactant intactId="EBI-10244131">
        <id>Q8TES7-6</id>
    </interactant>
    <interactant intactId="EBI-739580">
        <id>Q13137</id>
        <label>CALCOCO2</label>
    </interactant>
    <organismsDiffer>false</organismsDiffer>
    <experiments>3</experiments>
</comment>
<comment type="interaction">
    <interactant intactId="EBI-10244131">
        <id>Q8TES7-6</id>
    </interactant>
    <interactant intactId="EBI-10171570">
        <id>Q68D86</id>
        <label>CCDC102B</label>
    </interactant>
    <organismsDiffer>false</organismsDiffer>
    <experiments>3</experiments>
</comment>
<comment type="interaction">
    <interactant intactId="EBI-10244131">
        <id>Q8TES7-6</id>
    </interactant>
    <interactant intactId="EBI-747776">
        <id>Q53EZ4</id>
        <label>CEP55</label>
    </interactant>
    <organismsDiffer>false</organismsDiffer>
    <experiments>3</experiments>
</comment>
<comment type="interaction">
    <interactant intactId="EBI-10244131">
        <id>Q8TES7-6</id>
    </interactant>
    <interactant intactId="EBI-741977">
        <id>Q96MT8</id>
        <label>CEP63</label>
    </interactant>
    <organismsDiffer>false</organismsDiffer>
    <experiments>3</experiments>
</comment>
<comment type="interaction">
    <interactant intactId="EBI-10244131">
        <id>Q8TES7-6</id>
    </interactant>
    <interactant intactId="EBI-739784">
        <id>Q9BW66</id>
        <label>CINP</label>
    </interactant>
    <organismsDiffer>false</organismsDiffer>
    <experiments>3</experiments>
</comment>
<comment type="interaction">
    <interactant intactId="EBI-10244131">
        <id>Q8TES7-6</id>
    </interactant>
    <interactant intactId="EBI-748597">
        <id>Q05D60</id>
        <label>DEUP1</label>
    </interactant>
    <organismsDiffer>false</organismsDiffer>
    <experiments>6</experiments>
</comment>
<comment type="interaction">
    <interactant intactId="EBI-10244131">
        <id>Q8TES7-6</id>
    </interactant>
    <interactant intactId="EBI-3909284">
        <id>P15976</id>
        <label>GATA1</label>
    </interactant>
    <organismsDiffer>false</organismsDiffer>
    <experiments>3</experiments>
</comment>
<comment type="interaction">
    <interactant intactId="EBI-10244131">
        <id>Q8TES7-6</id>
    </interactant>
    <interactant intactId="EBI-618309">
        <id>Q08379</id>
        <label>GOLGA2</label>
    </interactant>
    <organismsDiffer>false</organismsDiffer>
    <experiments>3</experiments>
</comment>
<comment type="interaction">
    <interactant intactId="EBI-10244131">
        <id>Q8TES7-6</id>
    </interactant>
    <interactant intactId="EBI-747204">
        <id>Q9UKT9</id>
        <label>IKZF3</label>
    </interactant>
    <organismsDiffer>false</organismsDiffer>
    <experiments>3</experiments>
</comment>
<comment type="interaction">
    <interactant intactId="EBI-10244131">
        <id>Q8TES7-6</id>
    </interactant>
    <interactant intactId="EBI-10171552">
        <id>A1A4E9</id>
        <label>KRT13</label>
    </interactant>
    <organismsDiffer>false</organismsDiffer>
    <experiments>3</experiments>
</comment>
<comment type="interaction">
    <interactant intactId="EBI-10244131">
        <id>Q8TES7-6</id>
    </interactant>
    <interactant intactId="EBI-948001">
        <id>Q15323</id>
        <label>KRT31</label>
    </interactant>
    <organismsDiffer>false</organismsDiffer>
    <experiments>3</experiments>
</comment>
<comment type="interaction">
    <interactant intactId="EBI-10244131">
        <id>Q8TES7-6</id>
    </interactant>
    <interactant intactId="EBI-10171697">
        <id>Q6A162</id>
        <label>KRT40</label>
    </interactant>
    <organismsDiffer>false</organismsDiffer>
    <experiments>3</experiments>
</comment>
<comment type="interaction">
    <interactant intactId="EBI-10244131">
        <id>Q8TES7-6</id>
    </interactant>
    <interactant intactId="EBI-741037">
        <id>Q9BRK4</id>
        <label>LZTS2</label>
    </interactant>
    <organismsDiffer>false</organismsDiffer>
    <experiments>3</experiments>
</comment>
<comment type="interaction">
    <interactant intactId="EBI-10244131">
        <id>Q8TES7-6</id>
    </interactant>
    <interactant intactId="EBI-748397">
        <id>P50222</id>
        <label>MEOX2</label>
    </interactant>
    <organismsDiffer>false</organismsDiffer>
    <experiments>3</experiments>
</comment>
<comment type="interaction">
    <interactant intactId="EBI-10244131">
        <id>Q8TES7-6</id>
    </interactant>
    <interactant intactId="EBI-10172526">
        <id>Q9UJV3-2</id>
        <label>MID2</label>
    </interactant>
    <organismsDiffer>false</organismsDiffer>
    <experiments>3</experiments>
</comment>
<comment type="interaction">
    <interactant intactId="EBI-10244131">
        <id>Q8TES7-6</id>
    </interactant>
    <interactant intactId="EBI-2548751">
        <id>Q8TD10</id>
        <label>MIPOL1</label>
    </interactant>
    <organismsDiffer>false</organismsDiffer>
    <experiments>3</experiments>
</comment>
<comment type="interaction">
    <interactant intactId="EBI-10244131">
        <id>Q8TES7-6</id>
    </interactant>
    <interactant intactId="EBI-302345">
        <id>Q8ND90</id>
        <label>PNMA1</label>
    </interactant>
    <organismsDiffer>false</organismsDiffer>
    <experiments>3</experiments>
</comment>
<comment type="interaction">
    <interactant intactId="EBI-10244131">
        <id>Q8TES7-6</id>
    </interactant>
    <interactant intactId="EBI-740322">
        <id>Q93062</id>
        <label>RBPMS</label>
    </interactant>
    <organismsDiffer>false</organismsDiffer>
    <experiments>3</experiments>
</comment>
<comment type="interaction">
    <interactant intactId="EBI-10244131">
        <id>Q8TES7-6</id>
    </interactant>
    <interactant intactId="EBI-2212028">
        <id>Q9Y2D8</id>
        <label>SSX2IP</label>
    </interactant>
    <organismsDiffer>false</organismsDiffer>
    <experiments>3</experiments>
</comment>
<comment type="interaction">
    <interactant intactId="EBI-10244131">
        <id>Q8TES7-6</id>
    </interactant>
    <interactant intactId="EBI-80140">
        <id>P63165</id>
        <label>SUMO1</label>
    </interactant>
    <organismsDiffer>false</organismsDiffer>
    <experiments>3</experiments>
</comment>
<comment type="interaction">
    <interactant intactId="EBI-10244131">
        <id>Q8TES7-6</id>
    </interactant>
    <interactant intactId="EBI-742268">
        <id>O75478</id>
        <label>TADA2A</label>
    </interactant>
    <organismsDiffer>false</organismsDiffer>
    <experiments>3</experiments>
</comment>
<comment type="interaction">
    <interactant intactId="EBI-10244131">
        <id>Q8TES7-6</id>
    </interactant>
    <interactant intactId="EBI-10172380">
        <id>Q5VWN6-2</id>
        <label>TASOR2</label>
    </interactant>
    <organismsDiffer>false</organismsDiffer>
    <experiments>3</experiments>
</comment>
<comment type="interaction">
    <interactant intactId="EBI-10244131">
        <id>Q8TES7-6</id>
    </interactant>
    <interactant intactId="EBI-742397">
        <id>Q8IYF3</id>
        <label>TEX11</label>
    </interactant>
    <organismsDiffer>false</organismsDiffer>
    <experiments>3</experiments>
</comment>
<comment type="interaction">
    <interactant intactId="EBI-10244131">
        <id>Q8TES7-6</id>
    </interactant>
    <interactant intactId="EBI-717810">
        <id>Q08117</id>
        <label>TLE5</label>
    </interactant>
    <organismsDiffer>false</organismsDiffer>
    <experiments>3</experiments>
</comment>
<comment type="interaction">
    <interactant intactId="EBI-10244131">
        <id>Q8TES7-6</id>
    </interactant>
    <interactant intactId="EBI-359224">
        <id>Q13077</id>
        <label>TRAF1</label>
    </interactant>
    <organismsDiffer>false</organismsDiffer>
    <experiments>3</experiments>
</comment>
<comment type="interaction">
    <interactant intactId="EBI-10244131">
        <id>Q8TES7-6</id>
    </interactant>
    <interactant intactId="EBI-740098">
        <id>P36406</id>
        <label>TRIM23</label>
    </interactant>
    <organismsDiffer>false</organismsDiffer>
    <experiments>3</experiments>
</comment>
<comment type="interaction">
    <interactant intactId="EBI-10244131">
        <id>Q8TES7-6</id>
    </interactant>
    <interactant intactId="EBI-719493">
        <id>P14373</id>
        <label>TRIM27</label>
    </interactant>
    <organismsDiffer>false</organismsDiffer>
    <experiments>3</experiments>
</comment>
<comment type="interaction">
    <interactant intactId="EBI-10244131">
        <id>Q8TES7-6</id>
    </interactant>
    <interactant intactId="EBI-2130429">
        <id>Q9BYV2</id>
        <label>TRIM54</label>
    </interactant>
    <organismsDiffer>false</organismsDiffer>
    <experiments>3</experiments>
</comment>
<comment type="interaction">
    <interactant intactId="EBI-10244131">
        <id>Q8TES7-6</id>
    </interactant>
    <interactant intactId="EBI-744794">
        <id>Q9BZW7</id>
        <label>TSGA10</label>
    </interactant>
    <organismsDiffer>false</organismsDiffer>
    <experiments>3</experiments>
</comment>
<comment type="interaction">
    <interactant intactId="EBI-10244131">
        <id>Q8TES7-6</id>
    </interactant>
    <interactant intactId="EBI-8636434">
        <id>Q5I0X7</id>
        <label>TTC32</label>
    </interactant>
    <organismsDiffer>false</organismsDiffer>
    <experiments>3</experiments>
</comment>
<comment type="interaction">
    <interactant intactId="EBI-10244131">
        <id>Q8TES7-6</id>
    </interactant>
    <interactant intactId="EBI-739895">
        <id>Q8N6Y0</id>
        <label>USHBP1</label>
    </interactant>
    <organismsDiffer>false</organismsDiffer>
    <experiments>3</experiments>
</comment>
<comment type="interaction">
    <interactant intactId="EBI-10244131">
        <id>Q8TES7-6</id>
    </interactant>
    <interactant intactId="EBI-4400866">
        <id>Q9H9H4</id>
        <label>VPS37B</label>
    </interactant>
    <organismsDiffer>false</organismsDiffer>
    <experiments>3</experiments>
</comment>
<comment type="subcellular location">
    <subcellularLocation>
        <location>Cytoplasm</location>
        <location>Cytoskeleton</location>
        <location>Microtubule organizing center</location>
        <location>Centrosome</location>
        <location>Centriole</location>
    </subcellularLocation>
    <subcellularLocation>
        <location>Cytoplasm</location>
        <location>Cytoskeleton</location>
        <location>Spindle pole</location>
    </subcellularLocation>
    <subcellularLocation>
        <location>Cell junction</location>
    </subcellularLocation>
    <text>Localizes specifically to the distal appendage region of the centriole, which anchors the mother centriole to the plasma membrane. Localizes to the apical junction complex (AJC) in epithelial cells.</text>
</comment>
<comment type="alternative products">
    <event type="alternative splicing"/>
    <isoform>
        <id>Q8TES7-1</id>
        <name>1</name>
        <sequence type="displayed"/>
    </isoform>
    <isoform>
        <id>Q8TES7-2</id>
        <name>2</name>
        <sequence type="described" ref="VSP_027322 VSP_027323"/>
    </isoform>
    <isoform>
        <id>Q8TES7-3</id>
        <name>3</name>
        <sequence type="described" ref="VSP_027320 VSP_027321"/>
    </isoform>
    <isoform>
        <id>Q8TES7-4</id>
        <name>4</name>
        <sequence type="described" ref="VSP_027318 VSP_027319"/>
    </isoform>
    <isoform>
        <id>Q8TES7-5</id>
        <name>5</name>
        <sequence type="described" ref="VSP_040769 VSP_040770"/>
    </isoform>
    <isoform>
        <id>Q8TES7-6</id>
        <name>6</name>
        <sequence type="described" ref="VSP_041555 VSP_040770"/>
    </isoform>
</comment>
<comment type="tissue specificity">
    <text>Present in various epithelial cells (at protein level).</text>
</comment>
<comment type="sequence caution" evidence="11">
    <conflict type="erroneous initiation">
        <sequence resource="EMBL-CDS" id="BAB71400"/>
    </conflict>
    <text>Truncated N-terminus.</text>
</comment>
<comment type="sequence caution" evidence="11">
    <conflict type="erroneous initiation">
        <sequence resource="EMBL-CDS" id="BAB84871"/>
    </conflict>
    <text>Extended N-terminus.</text>
</comment>
<proteinExistence type="evidence at protein level"/>